<sequence length="216" mass="24075">MKQDSRFPNLFILDHPLIQHKLTHMRDKDTSTRTFRELLREITLLMGYEITRNLPITTKRVETPLVEIDAPVIAGKKLAIVPVLRAGVGMSDGLLELIPSARVGHIGVYRADDHRPVEYLVRLPDLEDRIFILCDPMVATGYSAAHAIDVLKRRGVPGERLMFLALVAAPEGVQVFQDAHPDVKLYVASLDSHLDDHAYIVPGLGDAGDRLFGTKN</sequence>
<organism>
    <name type="scientific">Burkholderia mallei (strain NCTC 10229)</name>
    <dbReference type="NCBI Taxonomy" id="412022"/>
    <lineage>
        <taxon>Bacteria</taxon>
        <taxon>Pseudomonadati</taxon>
        <taxon>Pseudomonadota</taxon>
        <taxon>Betaproteobacteria</taxon>
        <taxon>Burkholderiales</taxon>
        <taxon>Burkholderiaceae</taxon>
        <taxon>Burkholderia</taxon>
        <taxon>pseudomallei group</taxon>
    </lineage>
</organism>
<feature type="chain" id="PRO_1000053685" description="Uracil phosphoribosyltransferase">
    <location>
        <begin position="1"/>
        <end position="216"/>
    </location>
</feature>
<feature type="binding site" evidence="1">
    <location>
        <position position="85"/>
    </location>
    <ligand>
        <name>5-phospho-alpha-D-ribose 1-diphosphate</name>
        <dbReference type="ChEBI" id="CHEBI:58017"/>
    </ligand>
</feature>
<feature type="binding site" evidence="1">
    <location>
        <position position="110"/>
    </location>
    <ligand>
        <name>5-phospho-alpha-D-ribose 1-diphosphate</name>
        <dbReference type="ChEBI" id="CHEBI:58017"/>
    </ligand>
</feature>
<feature type="binding site" evidence="1">
    <location>
        <begin position="135"/>
        <end position="143"/>
    </location>
    <ligand>
        <name>5-phospho-alpha-D-ribose 1-diphosphate</name>
        <dbReference type="ChEBI" id="CHEBI:58017"/>
    </ligand>
</feature>
<feature type="binding site" evidence="1">
    <location>
        <position position="200"/>
    </location>
    <ligand>
        <name>uracil</name>
        <dbReference type="ChEBI" id="CHEBI:17568"/>
    </ligand>
</feature>
<feature type="binding site" evidence="1">
    <location>
        <begin position="205"/>
        <end position="207"/>
    </location>
    <ligand>
        <name>uracil</name>
        <dbReference type="ChEBI" id="CHEBI:17568"/>
    </ligand>
</feature>
<feature type="binding site" evidence="1">
    <location>
        <position position="206"/>
    </location>
    <ligand>
        <name>5-phospho-alpha-D-ribose 1-diphosphate</name>
        <dbReference type="ChEBI" id="CHEBI:58017"/>
    </ligand>
</feature>
<keyword id="KW-0021">Allosteric enzyme</keyword>
<keyword id="KW-0328">Glycosyltransferase</keyword>
<keyword id="KW-0342">GTP-binding</keyword>
<keyword id="KW-0460">Magnesium</keyword>
<keyword id="KW-0547">Nucleotide-binding</keyword>
<keyword id="KW-0808">Transferase</keyword>
<reference key="1">
    <citation type="journal article" date="2010" name="Genome Biol. Evol.">
        <title>Continuing evolution of Burkholderia mallei through genome reduction and large-scale rearrangements.</title>
        <authorList>
            <person name="Losada L."/>
            <person name="Ronning C.M."/>
            <person name="DeShazer D."/>
            <person name="Woods D."/>
            <person name="Fedorova N."/>
            <person name="Kim H.S."/>
            <person name="Shabalina S.A."/>
            <person name="Pearson T.R."/>
            <person name="Brinkac L."/>
            <person name="Tan P."/>
            <person name="Nandi T."/>
            <person name="Crabtree J."/>
            <person name="Badger J."/>
            <person name="Beckstrom-Sternberg S."/>
            <person name="Saqib M."/>
            <person name="Schutzer S.E."/>
            <person name="Keim P."/>
            <person name="Nierman W.C."/>
        </authorList>
    </citation>
    <scope>NUCLEOTIDE SEQUENCE [LARGE SCALE GENOMIC DNA]</scope>
    <source>
        <strain>NCTC 10229</strain>
    </source>
</reference>
<proteinExistence type="inferred from homology"/>
<name>UPP_BURM9</name>
<evidence type="ECO:0000255" key="1">
    <source>
        <dbReference type="HAMAP-Rule" id="MF_01218"/>
    </source>
</evidence>
<comment type="function">
    <text evidence="1">Catalyzes the conversion of uracil and 5-phospho-alpha-D-ribose 1-diphosphate (PRPP) to UMP and diphosphate.</text>
</comment>
<comment type="catalytic activity">
    <reaction evidence="1">
        <text>UMP + diphosphate = 5-phospho-alpha-D-ribose 1-diphosphate + uracil</text>
        <dbReference type="Rhea" id="RHEA:13017"/>
        <dbReference type="ChEBI" id="CHEBI:17568"/>
        <dbReference type="ChEBI" id="CHEBI:33019"/>
        <dbReference type="ChEBI" id="CHEBI:57865"/>
        <dbReference type="ChEBI" id="CHEBI:58017"/>
        <dbReference type="EC" id="2.4.2.9"/>
    </reaction>
</comment>
<comment type="cofactor">
    <cofactor evidence="1">
        <name>Mg(2+)</name>
        <dbReference type="ChEBI" id="CHEBI:18420"/>
    </cofactor>
    <text evidence="1">Binds 1 Mg(2+) ion per subunit. The magnesium is bound as Mg-PRPP.</text>
</comment>
<comment type="activity regulation">
    <text evidence="1">Allosterically activated by GTP.</text>
</comment>
<comment type="pathway">
    <text evidence="1">Pyrimidine metabolism; UMP biosynthesis via salvage pathway; UMP from uracil: step 1/1.</text>
</comment>
<comment type="similarity">
    <text evidence="1">Belongs to the UPRTase family.</text>
</comment>
<accession>A2S4B1</accession>
<gene>
    <name evidence="1" type="primary">upp</name>
    <name type="ordered locus">BMA10229_A0790</name>
</gene>
<dbReference type="EC" id="2.4.2.9" evidence="1"/>
<dbReference type="EMBL" id="CP000546">
    <property type="protein sequence ID" value="ABN01817.1"/>
    <property type="molecule type" value="Genomic_DNA"/>
</dbReference>
<dbReference type="RefSeq" id="WP_004186446.1">
    <property type="nucleotide sequence ID" value="NC_008836.1"/>
</dbReference>
<dbReference type="SMR" id="A2S4B1"/>
<dbReference type="GeneID" id="93059646"/>
<dbReference type="KEGG" id="bml:BMA10229_A0790"/>
<dbReference type="HOGENOM" id="CLU_067096_2_2_4"/>
<dbReference type="UniPathway" id="UPA00574">
    <property type="reaction ID" value="UER00636"/>
</dbReference>
<dbReference type="Proteomes" id="UP000002283">
    <property type="component" value="Chromosome I"/>
</dbReference>
<dbReference type="GO" id="GO:0005525">
    <property type="term" value="F:GTP binding"/>
    <property type="evidence" value="ECO:0007669"/>
    <property type="project" value="UniProtKB-KW"/>
</dbReference>
<dbReference type="GO" id="GO:0000287">
    <property type="term" value="F:magnesium ion binding"/>
    <property type="evidence" value="ECO:0007669"/>
    <property type="project" value="UniProtKB-UniRule"/>
</dbReference>
<dbReference type="GO" id="GO:0004845">
    <property type="term" value="F:uracil phosphoribosyltransferase activity"/>
    <property type="evidence" value="ECO:0007669"/>
    <property type="project" value="UniProtKB-UniRule"/>
</dbReference>
<dbReference type="GO" id="GO:0044206">
    <property type="term" value="P:UMP salvage"/>
    <property type="evidence" value="ECO:0007669"/>
    <property type="project" value="UniProtKB-UniRule"/>
</dbReference>
<dbReference type="GO" id="GO:0006223">
    <property type="term" value="P:uracil salvage"/>
    <property type="evidence" value="ECO:0007669"/>
    <property type="project" value="InterPro"/>
</dbReference>
<dbReference type="CDD" id="cd06223">
    <property type="entry name" value="PRTases_typeI"/>
    <property type="match status" value="1"/>
</dbReference>
<dbReference type="FunFam" id="3.40.50.2020:FF:000003">
    <property type="entry name" value="Uracil phosphoribosyltransferase"/>
    <property type="match status" value="1"/>
</dbReference>
<dbReference type="Gene3D" id="3.40.50.2020">
    <property type="match status" value="1"/>
</dbReference>
<dbReference type="HAMAP" id="MF_01218_B">
    <property type="entry name" value="Upp_B"/>
    <property type="match status" value="1"/>
</dbReference>
<dbReference type="InterPro" id="IPR000836">
    <property type="entry name" value="PRibTrfase_dom"/>
</dbReference>
<dbReference type="InterPro" id="IPR029057">
    <property type="entry name" value="PRTase-like"/>
</dbReference>
<dbReference type="InterPro" id="IPR034332">
    <property type="entry name" value="Upp_B"/>
</dbReference>
<dbReference type="InterPro" id="IPR050054">
    <property type="entry name" value="UPRTase/APRTase"/>
</dbReference>
<dbReference type="InterPro" id="IPR005765">
    <property type="entry name" value="Ura_phspho_trans"/>
</dbReference>
<dbReference type="NCBIfam" id="NF001097">
    <property type="entry name" value="PRK00129.1"/>
    <property type="match status" value="1"/>
</dbReference>
<dbReference type="NCBIfam" id="TIGR01091">
    <property type="entry name" value="upp"/>
    <property type="match status" value="1"/>
</dbReference>
<dbReference type="PANTHER" id="PTHR32315">
    <property type="entry name" value="ADENINE PHOSPHORIBOSYLTRANSFERASE"/>
    <property type="match status" value="1"/>
</dbReference>
<dbReference type="PANTHER" id="PTHR32315:SF4">
    <property type="entry name" value="URACIL PHOSPHORIBOSYLTRANSFERASE, CHLOROPLASTIC"/>
    <property type="match status" value="1"/>
</dbReference>
<dbReference type="Pfam" id="PF14681">
    <property type="entry name" value="UPRTase"/>
    <property type="match status" value="1"/>
</dbReference>
<dbReference type="SUPFAM" id="SSF53271">
    <property type="entry name" value="PRTase-like"/>
    <property type="match status" value="1"/>
</dbReference>
<protein>
    <recommendedName>
        <fullName evidence="1">Uracil phosphoribosyltransferase</fullName>
        <ecNumber evidence="1">2.4.2.9</ecNumber>
    </recommendedName>
    <alternativeName>
        <fullName evidence="1">UMP pyrophosphorylase</fullName>
    </alternativeName>
    <alternativeName>
        <fullName evidence="1">UPRTase</fullName>
    </alternativeName>
</protein>